<keyword id="KW-1003">Cell membrane</keyword>
<keyword id="KW-0472">Membrane</keyword>
<keyword id="KW-0484">Methanogenesis</keyword>
<keyword id="KW-0489">Methyltransferase</keyword>
<keyword id="KW-0554">One-carbon metabolism</keyword>
<keyword id="KW-1185">Reference proteome</keyword>
<keyword id="KW-0808">Transferase</keyword>
<keyword id="KW-1278">Translocase</keyword>
<keyword id="KW-0812">Transmembrane</keyword>
<keyword id="KW-1133">Transmembrane helix</keyword>
<name>MTRD_METAC</name>
<evidence type="ECO:0000255" key="1">
    <source>
        <dbReference type="HAMAP-Rule" id="MF_01097"/>
    </source>
</evidence>
<protein>
    <recommendedName>
        <fullName evidence="1">Tetrahydromethanopterin S-methyltransferase subunit D</fullName>
        <ecNumber evidence="1">7.2.1.4</ecNumber>
    </recommendedName>
    <alternativeName>
        <fullName evidence="1">N5-methyltetrahydromethanopterin--coenzyme M methyltransferase subunit D</fullName>
    </alternativeName>
</protein>
<dbReference type="EC" id="7.2.1.4" evidence="1"/>
<dbReference type="EMBL" id="AE010299">
    <property type="protein sequence ID" value="AAM03728.1"/>
    <property type="molecule type" value="Genomic_DNA"/>
</dbReference>
<dbReference type="RefSeq" id="WP_011020333.1">
    <property type="nucleotide sequence ID" value="NC_003552.1"/>
</dbReference>
<dbReference type="SMR" id="Q8TU00"/>
<dbReference type="FunCoup" id="Q8TU00">
    <property type="interactions" value="77"/>
</dbReference>
<dbReference type="STRING" id="188937.MA_0275"/>
<dbReference type="EnsemblBacteria" id="AAM03728">
    <property type="protein sequence ID" value="AAM03728"/>
    <property type="gene ID" value="MA_0275"/>
</dbReference>
<dbReference type="GeneID" id="1472167"/>
<dbReference type="KEGG" id="mac:MA_0275"/>
<dbReference type="HOGENOM" id="CLU_1109510_0_0_2"/>
<dbReference type="InParanoid" id="Q8TU00"/>
<dbReference type="OrthoDB" id="147994at2157"/>
<dbReference type="PhylomeDB" id="Q8TU00"/>
<dbReference type="UniPathway" id="UPA00640">
    <property type="reaction ID" value="UER00698"/>
</dbReference>
<dbReference type="Proteomes" id="UP000002487">
    <property type="component" value="Chromosome"/>
</dbReference>
<dbReference type="GO" id="GO:0005737">
    <property type="term" value="C:cytoplasm"/>
    <property type="evidence" value="ECO:0007669"/>
    <property type="project" value="InterPro"/>
</dbReference>
<dbReference type="GO" id="GO:0005886">
    <property type="term" value="C:plasma membrane"/>
    <property type="evidence" value="ECO:0007669"/>
    <property type="project" value="UniProtKB-SubCell"/>
</dbReference>
<dbReference type="GO" id="GO:0012506">
    <property type="term" value="C:vesicle membrane"/>
    <property type="evidence" value="ECO:0007669"/>
    <property type="project" value="InterPro"/>
</dbReference>
<dbReference type="GO" id="GO:0030269">
    <property type="term" value="F:tetrahydromethanopterin S-methyltransferase activity"/>
    <property type="evidence" value="ECO:0007669"/>
    <property type="project" value="UniProtKB-UniRule"/>
</dbReference>
<dbReference type="GO" id="GO:0019386">
    <property type="term" value="P:methanogenesis, from carbon dioxide"/>
    <property type="evidence" value="ECO:0007669"/>
    <property type="project" value="UniProtKB-UniRule"/>
</dbReference>
<dbReference type="GO" id="GO:0032259">
    <property type="term" value="P:methylation"/>
    <property type="evidence" value="ECO:0007669"/>
    <property type="project" value="UniProtKB-KW"/>
</dbReference>
<dbReference type="GO" id="GO:0006730">
    <property type="term" value="P:one-carbon metabolic process"/>
    <property type="evidence" value="ECO:0007669"/>
    <property type="project" value="UniProtKB-UniRule"/>
</dbReference>
<dbReference type="HAMAP" id="MF_01097">
    <property type="entry name" value="MtrD"/>
    <property type="match status" value="1"/>
</dbReference>
<dbReference type="InterPro" id="IPR005779">
    <property type="entry name" value="MeTrfase_D"/>
</dbReference>
<dbReference type="NCBIfam" id="TIGR01112">
    <property type="entry name" value="mtrD"/>
    <property type="match status" value="1"/>
</dbReference>
<dbReference type="Pfam" id="PF04207">
    <property type="entry name" value="MtrD"/>
    <property type="match status" value="1"/>
</dbReference>
<dbReference type="PIRSF" id="PIRSF016552">
    <property type="entry name" value="MtrD"/>
    <property type="match status" value="1"/>
</dbReference>
<gene>
    <name evidence="1" type="primary">mtrD</name>
    <name type="ordered locus">MA_0275</name>
</gene>
<reference key="1">
    <citation type="journal article" date="2002" name="Genome Res.">
        <title>The genome of Methanosarcina acetivorans reveals extensive metabolic and physiological diversity.</title>
        <authorList>
            <person name="Galagan J.E."/>
            <person name="Nusbaum C."/>
            <person name="Roy A."/>
            <person name="Endrizzi M.G."/>
            <person name="Macdonald P."/>
            <person name="FitzHugh W."/>
            <person name="Calvo S."/>
            <person name="Engels R."/>
            <person name="Smirnov S."/>
            <person name="Atnoor D."/>
            <person name="Brown A."/>
            <person name="Allen N."/>
            <person name="Naylor J."/>
            <person name="Stange-Thomann N."/>
            <person name="DeArellano K."/>
            <person name="Johnson R."/>
            <person name="Linton L."/>
            <person name="McEwan P."/>
            <person name="McKernan K."/>
            <person name="Talamas J."/>
            <person name="Tirrell A."/>
            <person name="Ye W."/>
            <person name="Zimmer A."/>
            <person name="Barber R.D."/>
            <person name="Cann I."/>
            <person name="Graham D.E."/>
            <person name="Grahame D.A."/>
            <person name="Guss A.M."/>
            <person name="Hedderich R."/>
            <person name="Ingram-Smith C."/>
            <person name="Kuettner H.C."/>
            <person name="Krzycki J.A."/>
            <person name="Leigh J.A."/>
            <person name="Li W."/>
            <person name="Liu J."/>
            <person name="Mukhopadhyay B."/>
            <person name="Reeve J.N."/>
            <person name="Smith K."/>
            <person name="Springer T.A."/>
            <person name="Umayam L.A."/>
            <person name="White O."/>
            <person name="White R.H."/>
            <person name="de Macario E.C."/>
            <person name="Ferry J.G."/>
            <person name="Jarrell K.F."/>
            <person name="Jing H."/>
            <person name="Macario A.J.L."/>
            <person name="Paulsen I.T."/>
            <person name="Pritchett M."/>
            <person name="Sowers K.R."/>
            <person name="Swanson R.V."/>
            <person name="Zinder S.H."/>
            <person name="Lander E."/>
            <person name="Metcalf W.W."/>
            <person name="Birren B."/>
        </authorList>
    </citation>
    <scope>NUCLEOTIDE SEQUENCE [LARGE SCALE GENOMIC DNA]</scope>
    <source>
        <strain>ATCC 35395 / DSM 2834 / JCM 12185 / C2A</strain>
    </source>
</reference>
<comment type="function">
    <text evidence="1">Part of a complex that catalyzes the formation of methyl-coenzyme M and tetrahydromethanopterin from coenzyme M and methyl-tetrahydromethanopterin. This is an energy-conserving, sodium-ion translocating step.</text>
</comment>
<comment type="catalytic activity">
    <reaction evidence="1">
        <text>5-methyl-5,6,7,8-tetrahydromethanopterin + coenzyme M + 2 Na(+)(in) = 5,6,7,8-tetrahydromethanopterin + methyl-coenzyme M + 2 Na(+)(out)</text>
        <dbReference type="Rhea" id="RHEA:53492"/>
        <dbReference type="ChEBI" id="CHEBI:29101"/>
        <dbReference type="ChEBI" id="CHEBI:58103"/>
        <dbReference type="ChEBI" id="CHEBI:58116"/>
        <dbReference type="ChEBI" id="CHEBI:58286"/>
        <dbReference type="ChEBI" id="CHEBI:58319"/>
        <dbReference type="EC" id="7.2.1.4"/>
    </reaction>
</comment>
<comment type="pathway">
    <text evidence="1">One-carbon metabolism; methanogenesis from CO(2); methyl-coenzyme M from 5,10-methylene-5,6,7,8-tetrahydromethanopterin: step 2/2.</text>
</comment>
<comment type="subunit">
    <text evidence="1">The complex is composed of 8 subunits; MtrA, MtrB, MtrC, MtrD, MtrE, MtrF, MtrG and MtrH.</text>
</comment>
<comment type="subcellular location">
    <subcellularLocation>
        <location evidence="1">Cell membrane</location>
        <topology evidence="1">Multi-pass membrane protein</topology>
    </subcellularLocation>
</comment>
<comment type="similarity">
    <text evidence="1">Belongs to the MtrD family.</text>
</comment>
<proteinExistence type="inferred from homology"/>
<organism>
    <name type="scientific">Methanosarcina acetivorans (strain ATCC 35395 / DSM 2834 / JCM 12185 / C2A)</name>
    <dbReference type="NCBI Taxonomy" id="188937"/>
    <lineage>
        <taxon>Archaea</taxon>
        <taxon>Methanobacteriati</taxon>
        <taxon>Methanobacteriota</taxon>
        <taxon>Stenosarchaea group</taxon>
        <taxon>Methanomicrobia</taxon>
        <taxon>Methanosarcinales</taxon>
        <taxon>Methanosarcinaceae</taxon>
        <taxon>Methanosarcina</taxon>
    </lineage>
</organism>
<feature type="chain" id="PRO_0000147528" description="Tetrahydromethanopterin S-methyltransferase subunit D">
    <location>
        <begin position="1"/>
        <end position="249"/>
    </location>
</feature>
<feature type="transmembrane region" description="Helical" evidence="1">
    <location>
        <begin position="9"/>
        <end position="29"/>
    </location>
</feature>
<feature type="transmembrane region" description="Helical" evidence="1">
    <location>
        <begin position="47"/>
        <end position="67"/>
    </location>
</feature>
<feature type="transmembrane region" description="Helical" evidence="1">
    <location>
        <begin position="75"/>
        <end position="95"/>
    </location>
</feature>
<feature type="transmembrane region" description="Helical" evidence="1">
    <location>
        <begin position="138"/>
        <end position="158"/>
    </location>
</feature>
<feature type="transmembrane region" description="Helical" evidence="1">
    <location>
        <begin position="183"/>
        <end position="203"/>
    </location>
</feature>
<feature type="transmembrane region" description="Helical" evidence="1">
    <location>
        <begin position="224"/>
        <end position="244"/>
    </location>
</feature>
<sequence length="249" mass="25352">MIDALMANILWLVFIIIGGVLISWSVHFVPVGGAPAAMAQATGIGTGTVQLAAGAGLTGLVSAGFMMNVTDNLPLILASGAVGAMIMISVTMIVGTWVYVYGVGCVPSSAKVKYDPITKYRQDLYVSQGTEGHGLPTVSFVSGVIGGLLGGIGGALVYYSLIEVGLTAGLSTGTSSGVTGHELVGIAAMFAIGIFFVNAVIPSYNIGGTIEGFHDPKWKKWPKAVISSFVATILCAIVAVIAISQLGGI</sequence>
<accession>Q8TU00</accession>